<accession>O13440</accession>
<accession>O13441</accession>
<protein>
    <recommendedName>
        <fullName>Acetyl-coenzyme A synthetase</fullName>
        <ecNumber>6.2.1.1</ecNumber>
    </recommendedName>
    <alternativeName>
        <fullName>Acetate--CoA ligase</fullName>
    </alternativeName>
    <alternativeName>
        <fullName>Acyl-activating enzyme</fullName>
    </alternativeName>
</protein>
<evidence type="ECO:0000250" key="1"/>
<evidence type="ECO:0000305" key="2"/>
<sequence length="661" mass="73094">MSEGPIRVAPHPIAKRVKHGCKTPHVSHIDDYRSQHRETIGHESDKWWAKKAHELLYWDRPFHTVRSGSFENGDIAWFPEGGLNASYNCVDRWAFKHPEKTAIIYEADEPGEGREISYAELLREVCSIANVLKSFGVKKGDTVSVYLPMTWQAVAAFLACARIGAIHSVVFAGFSAEALRDRMQDCKSRVLITSDEGRRGGKAIATKAIADAALKECPAVEKVLVLKRTGNPVPWTEGRDVWWHEAVARVPRYCPPEVMASEDPLFILYTSGSTGKPKGVVHTTGGYLLCAALTVKYVFDVHPDDRFACMADVGWITGHTYIVYGPLAIGATTTVFESTPVYPTPSRYWETVEKYKLTQFYSAPTAIRLLRRLGHEHVNKHDLSSLRVLGSVGEPINPEAWHWYNEHVGKTECAIVDTFWQTETGSIVVTPFPGAIETKPGAATVPFFGIEPAILEPTTGKVLEGNDVEGVLTIAHPWPSIARTIYGDHQRYLETYMKPYPGYFYTGDGAARDEDGYIWIKGRVDDVINVSGHRLSTAEIESALITHTGVAETAVIGTADELTGQAVYAFVTLKPEFKFDAENEAGLSKELILQVRKIIGPFAAPKRIYIVSDLPKTRSGKIMRRILRKIVAGEADQLGDLSTFADPGIVEVIKEKVASAA</sequence>
<organism>
    <name type="scientific">Coprinopsis cinerea</name>
    <name type="common">Inky cap fungus</name>
    <name type="synonym">Hormographiella aspergillata</name>
    <dbReference type="NCBI Taxonomy" id="5346"/>
    <lineage>
        <taxon>Eukaryota</taxon>
        <taxon>Fungi</taxon>
        <taxon>Dikarya</taxon>
        <taxon>Basidiomycota</taxon>
        <taxon>Agaricomycotina</taxon>
        <taxon>Agaricomycetes</taxon>
        <taxon>Agaricomycetidae</taxon>
        <taxon>Agaricales</taxon>
        <taxon>Agaricineae</taxon>
        <taxon>Psathyrellaceae</taxon>
        <taxon>Coprinopsis</taxon>
    </lineage>
</organism>
<gene>
    <name type="primary">ACS-1</name>
</gene>
<dbReference type="EC" id="6.2.1.1"/>
<dbReference type="EMBL" id="Y15417">
    <property type="protein sequence ID" value="CAA75612.1"/>
    <property type="molecule type" value="mRNA"/>
</dbReference>
<dbReference type="EMBL" id="Y15418">
    <property type="protein sequence ID" value="CAA75613.1"/>
    <property type="molecule type" value="Genomic_DNA"/>
</dbReference>
<dbReference type="SMR" id="O13440"/>
<dbReference type="VEuPathDB" id="FungiDB:CC1G_09467"/>
<dbReference type="VEuPathDB" id="FungiDB:CC2G_014513"/>
<dbReference type="GO" id="GO:0005829">
    <property type="term" value="C:cytosol"/>
    <property type="evidence" value="ECO:0007669"/>
    <property type="project" value="TreeGrafter"/>
</dbReference>
<dbReference type="GO" id="GO:0003987">
    <property type="term" value="F:acetate-CoA ligase activity"/>
    <property type="evidence" value="ECO:0007669"/>
    <property type="project" value="UniProtKB-EC"/>
</dbReference>
<dbReference type="GO" id="GO:0016208">
    <property type="term" value="F:AMP binding"/>
    <property type="evidence" value="ECO:0007669"/>
    <property type="project" value="InterPro"/>
</dbReference>
<dbReference type="GO" id="GO:0005524">
    <property type="term" value="F:ATP binding"/>
    <property type="evidence" value="ECO:0007669"/>
    <property type="project" value="UniProtKB-KW"/>
</dbReference>
<dbReference type="GO" id="GO:0019427">
    <property type="term" value="P:acetyl-CoA biosynthetic process from acetate"/>
    <property type="evidence" value="ECO:0007669"/>
    <property type="project" value="InterPro"/>
</dbReference>
<dbReference type="CDD" id="cd05966">
    <property type="entry name" value="ACS"/>
    <property type="match status" value="1"/>
</dbReference>
<dbReference type="FunFam" id="3.40.50.12780:FF:000001">
    <property type="entry name" value="Acetyl-coenzyme A synthetase"/>
    <property type="match status" value="1"/>
</dbReference>
<dbReference type="Gene3D" id="3.30.300.30">
    <property type="match status" value="1"/>
</dbReference>
<dbReference type="Gene3D" id="3.40.50.12780">
    <property type="entry name" value="N-terminal domain of ligase-like"/>
    <property type="match status" value="1"/>
</dbReference>
<dbReference type="InterPro" id="IPR011904">
    <property type="entry name" value="Ac_CoA_lig"/>
</dbReference>
<dbReference type="InterPro" id="IPR032387">
    <property type="entry name" value="ACAS_N"/>
</dbReference>
<dbReference type="InterPro" id="IPR025110">
    <property type="entry name" value="AMP-bd_C"/>
</dbReference>
<dbReference type="InterPro" id="IPR045851">
    <property type="entry name" value="AMP-bd_C_sf"/>
</dbReference>
<dbReference type="InterPro" id="IPR020845">
    <property type="entry name" value="AMP-binding_CS"/>
</dbReference>
<dbReference type="InterPro" id="IPR000873">
    <property type="entry name" value="AMP-dep_synth/lig_dom"/>
</dbReference>
<dbReference type="InterPro" id="IPR042099">
    <property type="entry name" value="ANL_N_sf"/>
</dbReference>
<dbReference type="NCBIfam" id="TIGR02188">
    <property type="entry name" value="Ac_CoA_lig_AcsA"/>
    <property type="match status" value="1"/>
</dbReference>
<dbReference type="NCBIfam" id="NF001208">
    <property type="entry name" value="PRK00174.1"/>
    <property type="match status" value="1"/>
</dbReference>
<dbReference type="PANTHER" id="PTHR24095">
    <property type="entry name" value="ACETYL-COENZYME A SYNTHETASE"/>
    <property type="match status" value="1"/>
</dbReference>
<dbReference type="PANTHER" id="PTHR24095:SF14">
    <property type="entry name" value="ACETYL-COENZYME A SYNTHETASE 1"/>
    <property type="match status" value="1"/>
</dbReference>
<dbReference type="Pfam" id="PF16177">
    <property type="entry name" value="ACAS_N"/>
    <property type="match status" value="1"/>
</dbReference>
<dbReference type="Pfam" id="PF00501">
    <property type="entry name" value="AMP-binding"/>
    <property type="match status" value="1"/>
</dbReference>
<dbReference type="Pfam" id="PF13193">
    <property type="entry name" value="AMP-binding_C"/>
    <property type="match status" value="1"/>
</dbReference>
<dbReference type="SUPFAM" id="SSF56801">
    <property type="entry name" value="Acetyl-CoA synthetase-like"/>
    <property type="match status" value="1"/>
</dbReference>
<dbReference type="PROSITE" id="PS00455">
    <property type="entry name" value="AMP_BINDING"/>
    <property type="match status" value="1"/>
</dbReference>
<feature type="chain" id="PRO_0000208409" description="Acetyl-coenzyme A synthetase">
    <location>
        <begin position="1"/>
        <end position="661"/>
    </location>
</feature>
<feature type="binding site" evidence="1">
    <location>
        <begin position="199"/>
        <end position="202"/>
    </location>
    <ligand>
        <name>CoA</name>
        <dbReference type="ChEBI" id="CHEBI:57287"/>
    </ligand>
</feature>
<feature type="binding site" evidence="1">
    <location>
        <position position="317"/>
    </location>
    <ligand>
        <name>CoA</name>
        <dbReference type="ChEBI" id="CHEBI:57287"/>
    </ligand>
</feature>
<feature type="binding site" evidence="1">
    <location>
        <begin position="393"/>
        <end position="395"/>
    </location>
    <ligand>
        <name>ATP</name>
        <dbReference type="ChEBI" id="CHEBI:30616"/>
    </ligand>
</feature>
<feature type="binding site" evidence="1">
    <location>
        <begin position="417"/>
        <end position="422"/>
    </location>
    <ligand>
        <name>ATP</name>
        <dbReference type="ChEBI" id="CHEBI:30616"/>
    </ligand>
</feature>
<feature type="binding site" evidence="1">
    <location>
        <position position="508"/>
    </location>
    <ligand>
        <name>ATP</name>
        <dbReference type="ChEBI" id="CHEBI:30616"/>
    </ligand>
</feature>
<feature type="binding site" evidence="1">
    <location>
        <position position="523"/>
    </location>
    <ligand>
        <name>ATP</name>
        <dbReference type="ChEBI" id="CHEBI:30616"/>
    </ligand>
</feature>
<feature type="binding site" evidence="1">
    <location>
        <position position="531"/>
    </location>
    <ligand>
        <name>CoA</name>
        <dbReference type="ChEBI" id="CHEBI:57287"/>
    </ligand>
</feature>
<feature type="binding site" evidence="1">
    <location>
        <position position="534"/>
    </location>
    <ligand>
        <name>ATP</name>
        <dbReference type="ChEBI" id="CHEBI:30616"/>
    </ligand>
</feature>
<feature type="binding site" evidence="1">
    <location>
        <position position="596"/>
    </location>
    <ligand>
        <name>CoA</name>
        <dbReference type="ChEBI" id="CHEBI:57287"/>
    </ligand>
</feature>
<feature type="sequence conflict" description="In Ref. 1; CAA75613." evidence="2" ref="1">
    <original>A</original>
    <variation>G</variation>
    <location>
        <position position="14"/>
    </location>
</feature>
<feature type="sequence conflict" description="In Ref. 1; CAA75613." evidence="2" ref="1">
    <original>F</original>
    <variation>L</variation>
    <location>
        <position position="644"/>
    </location>
</feature>
<keyword id="KW-0067">ATP-binding</keyword>
<keyword id="KW-0436">Ligase</keyword>
<keyword id="KW-0547">Nucleotide-binding</keyword>
<reference key="1">
    <citation type="submission" date="1997-11" db="EMBL/GenBank/DDBJ databases">
        <authorList>
            <person name="Chaure P.T."/>
            <person name="Casselton L.A."/>
            <person name="Connerton I.F."/>
        </authorList>
    </citation>
    <scope>NUCLEOTIDE SEQUENCE [GENOMIC DNA / MRNA]</scope>
    <source>
        <strain>JV6</strain>
    </source>
</reference>
<name>ACSA_COPCI</name>
<comment type="catalytic activity">
    <reaction>
        <text>acetate + ATP + CoA = acetyl-CoA + AMP + diphosphate</text>
        <dbReference type="Rhea" id="RHEA:23176"/>
        <dbReference type="ChEBI" id="CHEBI:30089"/>
        <dbReference type="ChEBI" id="CHEBI:30616"/>
        <dbReference type="ChEBI" id="CHEBI:33019"/>
        <dbReference type="ChEBI" id="CHEBI:57287"/>
        <dbReference type="ChEBI" id="CHEBI:57288"/>
        <dbReference type="ChEBI" id="CHEBI:456215"/>
        <dbReference type="EC" id="6.2.1.1"/>
    </reaction>
</comment>
<comment type="similarity">
    <text evidence="2">Belongs to the ATP-dependent AMP-binding enzyme family.</text>
</comment>
<proteinExistence type="evidence at transcript level"/>